<accession>Q0HUR9</accession>
<proteinExistence type="inferred from homology"/>
<evidence type="ECO:0000255" key="1">
    <source>
        <dbReference type="HAMAP-Rule" id="MF_01069"/>
    </source>
</evidence>
<evidence type="ECO:0000256" key="2">
    <source>
        <dbReference type="SAM" id="MobiDB-lite"/>
    </source>
</evidence>
<sequence length="545" mass="60843">MVSLLRCQSFKPSSSLICSLALSAAFALSSSAFAEETKPAENKPATPVVSPPKATAQPANKNQVRFTKTGTFDGDSVVKLARKLASKPYVVLKDPLPAGLAKLSYDEYRDIRFNPVSSIWRDQGLPFQMQMFHRGFYFQDLIEIAIVEANQATHLAYEPKYFTAGEVITQALPNDDIGYSGFRIHNQLNTNGVYDELMVFQGASYFRALGKGNSYGLSARGLALKTADPEGEEFPIFRAFWVERPSYDSNLIVVHALLDSPSVAGAYRFSVRPGDNTQIDVEATLFPRVELSKVGLAPSTSMFLHSLNGRHDTDDFRPEVHDSDGLLMFNGRGEHLWRPLANPRQLQVSAFSDNSPQGFGLIQRERNYASYQDLEAHYERRPSLWIEPVGNWGQGAVVLTEIPTESEIHDNIVSFWKPRQPIPAGSEYHFAYRMNWGDEPVAKTNSVVVSRTASGRADIAKATPRRLFVVDYHLNGAMPDELPLAKVESSGGVIANVVIARNAANNGYRLAFELEPEDKDLIELRAELKFSTPRQVETWLYRWTL</sequence>
<dbReference type="EMBL" id="CP000444">
    <property type="protein sequence ID" value="ABI43136.1"/>
    <property type="molecule type" value="Genomic_DNA"/>
</dbReference>
<dbReference type="SMR" id="Q0HUR9"/>
<dbReference type="KEGG" id="shm:Shewmr7_2148"/>
<dbReference type="HOGENOM" id="CLU_023403_2_0_6"/>
<dbReference type="UniPathway" id="UPA00637"/>
<dbReference type="GO" id="GO:0030288">
    <property type="term" value="C:outer membrane-bounded periplasmic space"/>
    <property type="evidence" value="ECO:0007669"/>
    <property type="project" value="TreeGrafter"/>
</dbReference>
<dbReference type="GO" id="GO:0030246">
    <property type="term" value="F:carbohydrate binding"/>
    <property type="evidence" value="ECO:0007669"/>
    <property type="project" value="InterPro"/>
</dbReference>
<dbReference type="GO" id="GO:0003824">
    <property type="term" value="F:catalytic activity"/>
    <property type="evidence" value="ECO:0007669"/>
    <property type="project" value="InterPro"/>
</dbReference>
<dbReference type="GO" id="GO:0051274">
    <property type="term" value="P:beta-glucan biosynthetic process"/>
    <property type="evidence" value="ECO:0007669"/>
    <property type="project" value="TreeGrafter"/>
</dbReference>
<dbReference type="FunFam" id="2.60.40.10:FF:001915">
    <property type="entry name" value="Glucans biosynthesis protein G"/>
    <property type="match status" value="1"/>
</dbReference>
<dbReference type="FunFam" id="2.70.98.10:FF:000001">
    <property type="entry name" value="Glucans biosynthesis protein G"/>
    <property type="match status" value="1"/>
</dbReference>
<dbReference type="Gene3D" id="2.70.98.10">
    <property type="match status" value="1"/>
</dbReference>
<dbReference type="Gene3D" id="2.60.40.10">
    <property type="entry name" value="Immunoglobulins"/>
    <property type="match status" value="1"/>
</dbReference>
<dbReference type="HAMAP" id="MF_01069">
    <property type="entry name" value="MdoG_OpgG"/>
    <property type="match status" value="1"/>
</dbReference>
<dbReference type="InterPro" id="IPR011013">
    <property type="entry name" value="Gal_mutarotase_sf_dom"/>
</dbReference>
<dbReference type="InterPro" id="IPR014718">
    <property type="entry name" value="GH-type_carb-bd"/>
</dbReference>
<dbReference type="InterPro" id="IPR014438">
    <property type="entry name" value="Glucan_biosyn_MdoG/MdoD"/>
</dbReference>
<dbReference type="InterPro" id="IPR007444">
    <property type="entry name" value="Glucan_biosyn_MdoG_C"/>
</dbReference>
<dbReference type="InterPro" id="IPR013783">
    <property type="entry name" value="Ig-like_fold"/>
</dbReference>
<dbReference type="InterPro" id="IPR014756">
    <property type="entry name" value="Ig_E-set"/>
</dbReference>
<dbReference type="InterPro" id="IPR023704">
    <property type="entry name" value="MdoG_OpgG"/>
</dbReference>
<dbReference type="PANTHER" id="PTHR30504">
    <property type="entry name" value="GLUCANS BIOSYNTHESIS PROTEIN"/>
    <property type="match status" value="1"/>
</dbReference>
<dbReference type="PANTHER" id="PTHR30504:SF2">
    <property type="entry name" value="GLUCANS BIOSYNTHESIS PROTEIN G"/>
    <property type="match status" value="1"/>
</dbReference>
<dbReference type="Pfam" id="PF04349">
    <property type="entry name" value="MdoG"/>
    <property type="match status" value="1"/>
</dbReference>
<dbReference type="PIRSF" id="PIRSF006281">
    <property type="entry name" value="MdoG"/>
    <property type="match status" value="1"/>
</dbReference>
<dbReference type="SUPFAM" id="SSF81296">
    <property type="entry name" value="E set domains"/>
    <property type="match status" value="1"/>
</dbReference>
<dbReference type="SUPFAM" id="SSF74650">
    <property type="entry name" value="Galactose mutarotase-like"/>
    <property type="match status" value="1"/>
</dbReference>
<organism>
    <name type="scientific">Shewanella sp. (strain MR-7)</name>
    <dbReference type="NCBI Taxonomy" id="60481"/>
    <lineage>
        <taxon>Bacteria</taxon>
        <taxon>Pseudomonadati</taxon>
        <taxon>Pseudomonadota</taxon>
        <taxon>Gammaproteobacteria</taxon>
        <taxon>Alteromonadales</taxon>
        <taxon>Shewanellaceae</taxon>
        <taxon>Shewanella</taxon>
    </lineage>
</organism>
<protein>
    <recommendedName>
        <fullName evidence="1">Glucans biosynthesis protein G</fullName>
    </recommendedName>
</protein>
<reference key="1">
    <citation type="submission" date="2006-08" db="EMBL/GenBank/DDBJ databases">
        <title>Complete sequence of chromosome 1 of Shewanella sp. MR-7.</title>
        <authorList>
            <person name="Copeland A."/>
            <person name="Lucas S."/>
            <person name="Lapidus A."/>
            <person name="Barry K."/>
            <person name="Detter J.C."/>
            <person name="Glavina del Rio T."/>
            <person name="Hammon N."/>
            <person name="Israni S."/>
            <person name="Dalin E."/>
            <person name="Tice H."/>
            <person name="Pitluck S."/>
            <person name="Kiss H."/>
            <person name="Brettin T."/>
            <person name="Bruce D."/>
            <person name="Han C."/>
            <person name="Tapia R."/>
            <person name="Gilna P."/>
            <person name="Schmutz J."/>
            <person name="Larimer F."/>
            <person name="Land M."/>
            <person name="Hauser L."/>
            <person name="Kyrpides N."/>
            <person name="Mikhailova N."/>
            <person name="Nealson K."/>
            <person name="Konstantinidis K."/>
            <person name="Klappenbach J."/>
            <person name="Tiedje J."/>
            <person name="Richardson P."/>
        </authorList>
    </citation>
    <scope>NUCLEOTIDE SEQUENCE [LARGE SCALE GENOMIC DNA]</scope>
    <source>
        <strain>MR-7</strain>
    </source>
</reference>
<feature type="signal peptide" evidence="1">
    <location>
        <begin position="1"/>
        <end position="34"/>
    </location>
</feature>
<feature type="chain" id="PRO_5000128881" description="Glucans biosynthesis protein G">
    <location>
        <begin position="35"/>
        <end position="545"/>
    </location>
</feature>
<feature type="region of interest" description="Disordered" evidence="2">
    <location>
        <begin position="38"/>
        <end position="60"/>
    </location>
</feature>
<keyword id="KW-0574">Periplasm</keyword>
<keyword id="KW-0732">Signal</keyword>
<gene>
    <name evidence="1" type="primary">opgG</name>
    <name type="ordered locus">Shewmr7_2148</name>
</gene>
<name>OPGG_SHESR</name>
<comment type="function">
    <text evidence="1">Involved in the biosynthesis of osmoregulated periplasmic glucans (OPGs).</text>
</comment>
<comment type="pathway">
    <text evidence="1">Glycan metabolism; osmoregulated periplasmic glucan (OPG) biosynthesis.</text>
</comment>
<comment type="subcellular location">
    <subcellularLocation>
        <location evidence="1">Periplasm</location>
    </subcellularLocation>
</comment>
<comment type="similarity">
    <text evidence="1">Belongs to the OpgD/OpgG family.</text>
</comment>